<organism>
    <name type="scientific">Staphylococcus aureus (strain MSSA476)</name>
    <dbReference type="NCBI Taxonomy" id="282459"/>
    <lineage>
        <taxon>Bacteria</taxon>
        <taxon>Bacillati</taxon>
        <taxon>Bacillota</taxon>
        <taxon>Bacilli</taxon>
        <taxon>Bacillales</taxon>
        <taxon>Staphylococcaceae</taxon>
        <taxon>Staphylococcus</taxon>
    </lineage>
</organism>
<accession>Q6GAG7</accession>
<gene>
    <name evidence="1" type="primary">menB</name>
    <name type="ordered locus">SAS0981</name>
</gene>
<feature type="chain" id="PRO_0000224818" description="1,4-dihydroxy-2-naphthoyl-CoA synthase">
    <location>
        <begin position="1"/>
        <end position="273"/>
    </location>
</feature>
<feature type="region of interest" description="Disordered" evidence="2">
    <location>
        <begin position="254"/>
        <end position="273"/>
    </location>
</feature>
<feature type="compositionally biased region" description="Basic and acidic residues" evidence="2">
    <location>
        <begin position="254"/>
        <end position="265"/>
    </location>
</feature>
<feature type="binding site" description="in other chain" evidence="1">
    <location>
        <position position="34"/>
    </location>
    <ligand>
        <name>substrate</name>
        <note>ligand shared between two neighboring subunits</note>
    </ligand>
</feature>
<feature type="binding site" description="in other chain" evidence="1">
    <location>
        <begin position="73"/>
        <end position="77"/>
    </location>
    <ligand>
        <name>substrate</name>
        <note>ligand shared between two neighboring subunits</note>
    </ligand>
</feature>
<feature type="binding site" description="in other chain" evidence="1">
    <location>
        <position position="85"/>
    </location>
    <ligand>
        <name>substrate</name>
        <note>ligand shared between two neighboring subunits</note>
    </ligand>
</feature>
<feature type="binding site" description="in other chain" evidence="1">
    <location>
        <begin position="117"/>
        <end position="121"/>
    </location>
    <ligand>
        <name>substrate</name>
        <note>ligand shared between two neighboring subunits</note>
    </ligand>
</feature>
<feature type="binding site" evidence="1">
    <location>
        <begin position="142"/>
        <end position="144"/>
    </location>
    <ligand>
        <name>hydrogencarbonate</name>
        <dbReference type="ChEBI" id="CHEBI:17544"/>
    </ligand>
</feature>
<feature type="binding site" description="in other chain" evidence="1">
    <location>
        <position position="143"/>
    </location>
    <ligand>
        <name>substrate</name>
        <note>ligand shared between two neighboring subunits</note>
    </ligand>
</feature>
<feature type="binding site" description="in other chain" evidence="1">
    <location>
        <position position="149"/>
    </location>
    <ligand>
        <name>substrate</name>
        <note>ligand shared between two neighboring subunits</note>
    </ligand>
</feature>
<feature type="binding site" evidence="1">
    <location>
        <position position="246"/>
    </location>
    <ligand>
        <name>substrate</name>
        <note>ligand shared between two neighboring subunits</note>
    </ligand>
</feature>
<feature type="binding site" evidence="1">
    <location>
        <position position="261"/>
    </location>
    <ligand>
        <name>substrate</name>
        <note>ligand shared between two neighboring subunits</note>
    </ligand>
</feature>
<feature type="site" description="Important for catalysis" evidence="1">
    <location>
        <position position="85"/>
    </location>
</feature>
<feature type="site" description="Important for catalysis" evidence="1">
    <location>
        <position position="246"/>
    </location>
</feature>
<comment type="function">
    <text evidence="1">Converts o-succinylbenzoyl-CoA (OSB-CoA) to 1,4-dihydroxy-2-naphthoyl-CoA (DHNA-CoA).</text>
</comment>
<comment type="catalytic activity">
    <reaction evidence="1">
        <text>2-succinylbenzoyl-CoA + H(+) = 1,4-dihydroxy-2-naphthoyl-CoA + H2O</text>
        <dbReference type="Rhea" id="RHEA:26562"/>
        <dbReference type="ChEBI" id="CHEBI:15377"/>
        <dbReference type="ChEBI" id="CHEBI:15378"/>
        <dbReference type="ChEBI" id="CHEBI:57364"/>
        <dbReference type="ChEBI" id="CHEBI:58897"/>
        <dbReference type="EC" id="4.1.3.36"/>
    </reaction>
</comment>
<comment type="cofactor">
    <cofactor evidence="1">
        <name>hydrogencarbonate</name>
        <dbReference type="ChEBI" id="CHEBI:17544"/>
    </cofactor>
</comment>
<comment type="pathway">
    <text evidence="1">Quinol/quinone metabolism; 1,4-dihydroxy-2-naphthoate biosynthesis; 1,4-dihydroxy-2-naphthoate from chorismate: step 6/7.</text>
</comment>
<comment type="pathway">
    <text evidence="1">Quinol/quinone metabolism; menaquinone biosynthesis.</text>
</comment>
<comment type="similarity">
    <text evidence="1">Belongs to the enoyl-CoA hydratase/isomerase family. MenB subfamily.</text>
</comment>
<evidence type="ECO:0000255" key="1">
    <source>
        <dbReference type="HAMAP-Rule" id="MF_01934"/>
    </source>
</evidence>
<evidence type="ECO:0000256" key="2">
    <source>
        <dbReference type="SAM" id="MobiDB-lite"/>
    </source>
</evidence>
<reference key="1">
    <citation type="journal article" date="2004" name="Proc. Natl. Acad. Sci. U.S.A.">
        <title>Complete genomes of two clinical Staphylococcus aureus strains: evidence for the rapid evolution of virulence and drug resistance.</title>
        <authorList>
            <person name="Holden M.T.G."/>
            <person name="Feil E.J."/>
            <person name="Lindsay J.A."/>
            <person name="Peacock S.J."/>
            <person name="Day N.P.J."/>
            <person name="Enright M.C."/>
            <person name="Foster T.J."/>
            <person name="Moore C.E."/>
            <person name="Hurst L."/>
            <person name="Atkin R."/>
            <person name="Barron A."/>
            <person name="Bason N."/>
            <person name="Bentley S.D."/>
            <person name="Chillingworth C."/>
            <person name="Chillingworth T."/>
            <person name="Churcher C."/>
            <person name="Clark L."/>
            <person name="Corton C."/>
            <person name="Cronin A."/>
            <person name="Doggett J."/>
            <person name="Dowd L."/>
            <person name="Feltwell T."/>
            <person name="Hance Z."/>
            <person name="Harris B."/>
            <person name="Hauser H."/>
            <person name="Holroyd S."/>
            <person name="Jagels K."/>
            <person name="James K.D."/>
            <person name="Lennard N."/>
            <person name="Line A."/>
            <person name="Mayes R."/>
            <person name="Moule S."/>
            <person name="Mungall K."/>
            <person name="Ormond D."/>
            <person name="Quail M.A."/>
            <person name="Rabbinowitsch E."/>
            <person name="Rutherford K.M."/>
            <person name="Sanders M."/>
            <person name="Sharp S."/>
            <person name="Simmonds M."/>
            <person name="Stevens K."/>
            <person name="Whitehead S."/>
            <person name="Barrell B.G."/>
            <person name="Spratt B.G."/>
            <person name="Parkhill J."/>
        </authorList>
    </citation>
    <scope>NUCLEOTIDE SEQUENCE [LARGE SCALE GENOMIC DNA]</scope>
    <source>
        <strain>MSSA476</strain>
    </source>
</reference>
<proteinExistence type="inferred from homology"/>
<protein>
    <recommendedName>
        <fullName evidence="1">1,4-dihydroxy-2-naphthoyl-CoA synthase</fullName>
        <shortName evidence="1">DHNA-CoA synthase</shortName>
        <ecNumber evidence="1">4.1.3.36</ecNumber>
    </recommendedName>
</protein>
<dbReference type="EC" id="4.1.3.36" evidence="1"/>
<dbReference type="EMBL" id="BX571857">
    <property type="protein sequence ID" value="CAG42756.1"/>
    <property type="molecule type" value="Genomic_DNA"/>
</dbReference>
<dbReference type="RefSeq" id="WP_000184953.1">
    <property type="nucleotide sequence ID" value="NC_002953.3"/>
</dbReference>
<dbReference type="SMR" id="Q6GAG7"/>
<dbReference type="KEGG" id="sas:SAS0981"/>
<dbReference type="HOGENOM" id="CLU_009834_7_7_9"/>
<dbReference type="UniPathway" id="UPA00079"/>
<dbReference type="UniPathway" id="UPA01057">
    <property type="reaction ID" value="UER00167"/>
</dbReference>
<dbReference type="GO" id="GO:0005829">
    <property type="term" value="C:cytosol"/>
    <property type="evidence" value="ECO:0007669"/>
    <property type="project" value="TreeGrafter"/>
</dbReference>
<dbReference type="GO" id="GO:0008935">
    <property type="term" value="F:1,4-dihydroxy-2-naphthoyl-CoA synthase activity"/>
    <property type="evidence" value="ECO:0007669"/>
    <property type="project" value="UniProtKB-UniRule"/>
</dbReference>
<dbReference type="GO" id="GO:0009234">
    <property type="term" value="P:menaquinone biosynthetic process"/>
    <property type="evidence" value="ECO:0007669"/>
    <property type="project" value="UniProtKB-UniRule"/>
</dbReference>
<dbReference type="CDD" id="cd06558">
    <property type="entry name" value="crotonase-like"/>
    <property type="match status" value="1"/>
</dbReference>
<dbReference type="FunFam" id="1.10.12.10:FF:000003">
    <property type="entry name" value="1,4-dihydroxy-2-naphthoyl-CoA synthase"/>
    <property type="match status" value="1"/>
</dbReference>
<dbReference type="FunFam" id="3.90.226.10:FF:000003">
    <property type="entry name" value="1,4-dihydroxy-2-naphthoyl-CoA synthase"/>
    <property type="match status" value="1"/>
</dbReference>
<dbReference type="Gene3D" id="3.90.226.10">
    <property type="entry name" value="2-enoyl-CoA Hydratase, Chain A, domain 1"/>
    <property type="match status" value="1"/>
</dbReference>
<dbReference type="Gene3D" id="1.10.12.10">
    <property type="entry name" value="Lyase 2-enoyl-coa Hydratase, Chain A, domain 2"/>
    <property type="match status" value="1"/>
</dbReference>
<dbReference type="HAMAP" id="MF_01934">
    <property type="entry name" value="MenB"/>
    <property type="match status" value="1"/>
</dbReference>
<dbReference type="InterPro" id="IPR029045">
    <property type="entry name" value="ClpP/crotonase-like_dom_sf"/>
</dbReference>
<dbReference type="InterPro" id="IPR010198">
    <property type="entry name" value="DHNA-CoA_synthase_MenB"/>
</dbReference>
<dbReference type="InterPro" id="IPR001753">
    <property type="entry name" value="Enoyl-CoA_hydra/iso"/>
</dbReference>
<dbReference type="InterPro" id="IPR014748">
    <property type="entry name" value="Enoyl-CoA_hydra_C"/>
</dbReference>
<dbReference type="NCBIfam" id="TIGR01929">
    <property type="entry name" value="menB"/>
    <property type="match status" value="1"/>
</dbReference>
<dbReference type="NCBIfam" id="NF005637">
    <property type="entry name" value="PRK07396.1"/>
    <property type="match status" value="1"/>
</dbReference>
<dbReference type="PANTHER" id="PTHR43113:SF1">
    <property type="entry name" value="1,4-DIHYDROXY-2-NAPHTHOYL-COA SYNTHASE, PEROXISOMAL"/>
    <property type="match status" value="1"/>
</dbReference>
<dbReference type="PANTHER" id="PTHR43113">
    <property type="entry name" value="NUCLEOSIDE-DIPHOSPHATE-SUGAR EPIMERASE"/>
    <property type="match status" value="1"/>
</dbReference>
<dbReference type="Pfam" id="PF00378">
    <property type="entry name" value="ECH_1"/>
    <property type="match status" value="1"/>
</dbReference>
<dbReference type="SUPFAM" id="SSF52096">
    <property type="entry name" value="ClpP/crotonase"/>
    <property type="match status" value="1"/>
</dbReference>
<sequence>MTNRQWETLREYDEIKYEFYEGIAKVTINRPEVRNAFTPKTVSEMIDAFSRARDDQNVSVIVLTGEGDLAFCSGGDQKKRGHGGYVGEDQIPRLNVLDLQRLIRIIPKPVIAMVKGYAVGGGNVLNVVCDLTIAADNAIFGQTGPKVGSFDAGYGSGYLARIVGHKKAREIWYLCRQYNAQEALDMGLVNTVVPLEKVEDETVQWCKEIMKHSPTALRFLKAAMNADTDGLAGLQQMAGDATLLYYTTDEAKEGRDAFKEKRDPDFDQFPKFP</sequence>
<name>MENB_STAAS</name>
<keyword id="KW-0456">Lyase</keyword>
<keyword id="KW-0474">Menaquinone biosynthesis</keyword>